<reference key="1">
    <citation type="journal article" date="1996" name="Genetics">
        <title>Isolation of two apsA suppressor strains in Aspergillus nidulans.</title>
        <authorList>
            <person name="Kruger M."/>
            <person name="Fischer R."/>
        </authorList>
    </citation>
    <scope>NUCLEOTIDE SEQUENCE [GENOMIC DNA]</scope>
    <scope>DISRUPTION PHENOTYPE</scope>
</reference>
<reference key="2">
    <citation type="journal article" date="1998" name="EMBO J.">
        <title>Integrity of a Zn finger-like domain in SamB is crucial for morphogenesis in ascomycetous fungi.</title>
        <authorList>
            <person name="Kruger M."/>
            <person name="Fischer R."/>
        </authorList>
    </citation>
    <scope>NUCLEOTIDE SEQUENCE [GENOMIC DNA]</scope>
    <scope>SUBCELLULAR LOCATION</scope>
    <scope>FUNCTION</scope>
</reference>
<reference key="3">
    <citation type="journal article" date="2005" name="Nature">
        <title>Sequencing of Aspergillus nidulans and comparative analysis with A. fumigatus and A. oryzae.</title>
        <authorList>
            <person name="Galagan J.E."/>
            <person name="Calvo S.E."/>
            <person name="Cuomo C."/>
            <person name="Ma L.-J."/>
            <person name="Wortman J.R."/>
            <person name="Batzoglou S."/>
            <person name="Lee S.-I."/>
            <person name="Bastuerkmen M."/>
            <person name="Spevak C.C."/>
            <person name="Clutterbuck J."/>
            <person name="Kapitonov V."/>
            <person name="Jurka J."/>
            <person name="Scazzocchio C."/>
            <person name="Farman M.L."/>
            <person name="Butler J."/>
            <person name="Purcell S."/>
            <person name="Harris S."/>
            <person name="Braus G.H."/>
            <person name="Draht O."/>
            <person name="Busch S."/>
            <person name="D'Enfert C."/>
            <person name="Bouchier C."/>
            <person name="Goldman G.H."/>
            <person name="Bell-Pedersen D."/>
            <person name="Griffiths-Jones S."/>
            <person name="Doonan J.H."/>
            <person name="Yu J."/>
            <person name="Vienken K."/>
            <person name="Pain A."/>
            <person name="Freitag M."/>
            <person name="Selker E.U."/>
            <person name="Archer D.B."/>
            <person name="Penalva M.A."/>
            <person name="Oakley B.R."/>
            <person name="Momany M."/>
            <person name="Tanaka T."/>
            <person name="Kumagai T."/>
            <person name="Asai K."/>
            <person name="Machida M."/>
            <person name="Nierman W.C."/>
            <person name="Denning D.W."/>
            <person name="Caddick M.X."/>
            <person name="Hynes M."/>
            <person name="Paoletti M."/>
            <person name="Fischer R."/>
            <person name="Miller B.L."/>
            <person name="Dyer P.S."/>
            <person name="Sachs M.S."/>
            <person name="Osmani S.A."/>
            <person name="Birren B.W."/>
        </authorList>
    </citation>
    <scope>NUCLEOTIDE SEQUENCE [LARGE SCALE GENOMIC DNA]</scope>
    <source>
        <strain>FGSC A4 / ATCC 38163 / CBS 112.46 / NRRL 194 / M139</strain>
    </source>
</reference>
<reference key="4">
    <citation type="journal article" date="2009" name="Fungal Genet. Biol.">
        <title>The 2008 update of the Aspergillus nidulans genome annotation: a community effort.</title>
        <authorList>
            <person name="Wortman J.R."/>
            <person name="Gilsenan J.M."/>
            <person name="Joardar V."/>
            <person name="Deegan J."/>
            <person name="Clutterbuck J."/>
            <person name="Andersen M.R."/>
            <person name="Archer D."/>
            <person name="Bencina M."/>
            <person name="Braus G."/>
            <person name="Coutinho P."/>
            <person name="von Dohren H."/>
            <person name="Doonan J."/>
            <person name="Driessen A.J."/>
            <person name="Durek P."/>
            <person name="Espeso E."/>
            <person name="Fekete E."/>
            <person name="Flipphi M."/>
            <person name="Estrada C.G."/>
            <person name="Geysens S."/>
            <person name="Goldman G."/>
            <person name="de Groot P.W."/>
            <person name="Hansen K."/>
            <person name="Harris S.D."/>
            <person name="Heinekamp T."/>
            <person name="Helmstaedt K."/>
            <person name="Henrissat B."/>
            <person name="Hofmann G."/>
            <person name="Homan T."/>
            <person name="Horio T."/>
            <person name="Horiuchi H."/>
            <person name="James S."/>
            <person name="Jones M."/>
            <person name="Karaffa L."/>
            <person name="Karanyi Z."/>
            <person name="Kato M."/>
            <person name="Keller N."/>
            <person name="Kelly D.E."/>
            <person name="Kiel J.A."/>
            <person name="Kim J.M."/>
            <person name="van der Klei I.J."/>
            <person name="Klis F.M."/>
            <person name="Kovalchuk A."/>
            <person name="Krasevec N."/>
            <person name="Kubicek C.P."/>
            <person name="Liu B."/>
            <person name="Maccabe A."/>
            <person name="Meyer V."/>
            <person name="Mirabito P."/>
            <person name="Miskei M."/>
            <person name="Mos M."/>
            <person name="Mullins J."/>
            <person name="Nelson D.R."/>
            <person name="Nielsen J."/>
            <person name="Oakley B.R."/>
            <person name="Osmani S.A."/>
            <person name="Pakula T."/>
            <person name="Paszewski A."/>
            <person name="Paulsen I."/>
            <person name="Pilsyk S."/>
            <person name="Pocsi I."/>
            <person name="Punt P.J."/>
            <person name="Ram A.F."/>
            <person name="Ren Q."/>
            <person name="Robellet X."/>
            <person name="Robson G."/>
            <person name="Seiboth B."/>
            <person name="van Solingen P."/>
            <person name="Specht T."/>
            <person name="Sun J."/>
            <person name="Taheri-Talesh N."/>
            <person name="Takeshita N."/>
            <person name="Ussery D."/>
            <person name="vanKuyk P.A."/>
            <person name="Visser H."/>
            <person name="van de Vondervoort P.J."/>
            <person name="de Vries R.P."/>
            <person name="Walton J."/>
            <person name="Xiang X."/>
            <person name="Xiong Y."/>
            <person name="Zeng A.P."/>
            <person name="Brandt B.W."/>
            <person name="Cornell M.J."/>
            <person name="van den Hondel C.A."/>
            <person name="Visser J."/>
            <person name="Oliver S.G."/>
            <person name="Turner G."/>
        </authorList>
    </citation>
    <scope>GENOME REANNOTATION</scope>
    <source>
        <strain>FGSC A4 / ATCC 38163 / CBS 112.46 / NRRL 194 / M139</strain>
    </source>
</reference>
<organism>
    <name type="scientific">Emericella nidulans (strain FGSC A4 / ATCC 38163 / CBS 112.46 / NRRL 194 / M139)</name>
    <name type="common">Aspergillus nidulans</name>
    <dbReference type="NCBI Taxonomy" id="227321"/>
    <lineage>
        <taxon>Eukaryota</taxon>
        <taxon>Fungi</taxon>
        <taxon>Dikarya</taxon>
        <taxon>Ascomycota</taxon>
        <taxon>Pezizomycotina</taxon>
        <taxon>Eurotiomycetes</taxon>
        <taxon>Eurotiomycetidae</taxon>
        <taxon>Eurotiales</taxon>
        <taxon>Aspergillaceae</taxon>
        <taxon>Aspergillus</taxon>
        <taxon>Aspergillus subgen. Nidulantes</taxon>
    </lineage>
</organism>
<feature type="chain" id="PRO_0000393328" description="MYND-type zinc finger protein samB">
    <location>
        <begin position="1"/>
        <end position="590"/>
    </location>
</feature>
<feature type="zinc finger region" description="MYND-type; degenerate" evidence="1">
    <location>
        <begin position="546"/>
        <end position="587"/>
    </location>
</feature>
<feature type="region of interest" description="Disordered" evidence="2">
    <location>
        <begin position="133"/>
        <end position="220"/>
    </location>
</feature>
<feature type="region of interest" description="Disordered" evidence="2">
    <location>
        <begin position="297"/>
        <end position="344"/>
    </location>
</feature>
<feature type="compositionally biased region" description="Basic residues" evidence="2">
    <location>
        <begin position="139"/>
        <end position="149"/>
    </location>
</feature>
<feature type="compositionally biased region" description="Low complexity" evidence="2">
    <location>
        <begin position="152"/>
        <end position="167"/>
    </location>
</feature>
<feature type="compositionally biased region" description="Pro residues" evidence="2">
    <location>
        <begin position="202"/>
        <end position="211"/>
    </location>
</feature>
<feature type="binding site" evidence="1">
    <location>
        <position position="562"/>
    </location>
    <ligand>
        <name>Zn(2+)</name>
        <dbReference type="ChEBI" id="CHEBI:29105"/>
    </ligand>
</feature>
<feature type="binding site" evidence="1">
    <location>
        <position position="565"/>
    </location>
    <ligand>
        <name>Zn(2+)</name>
        <dbReference type="ChEBI" id="CHEBI:29105"/>
    </ligand>
</feature>
<feature type="binding site" evidence="1">
    <location>
        <position position="583"/>
    </location>
    <ligand>
        <name>Zn(2+)</name>
        <dbReference type="ChEBI" id="CHEBI:29105"/>
    </ligand>
</feature>
<feature type="binding site" evidence="1">
    <location>
        <position position="587"/>
    </location>
    <ligand>
        <name>Zn(2+)</name>
        <dbReference type="ChEBI" id="CHEBI:29105"/>
    </ligand>
</feature>
<proteinExistence type="inferred from homology"/>
<sequence length="590" mass="66272">MREVNFSIPNVNKASVNITTTLYDRRALDCTSTLPLINSLNHLAYLTTSSARIRDILTVDGGIERLVCILKEGRSNNLMEMWKWSLAFQCVVNIGVRGSENVRTRVVEADMVPVIATILDNYIKVMDKVRARSDSEAQRHRHHQLHHKITPTASDSTSRSSFSDASSNEQRTSRRQPPPTHIEIPPFFHDTRAVESNAADVPSPPRAPMTSPPERSTFGQDTYAHRSHAPLRHRAIQPLATAIPSMDAADGSGLRPVRDTERLPSMLPAAFNELASQPDSPTTPSGAGHIRSNVHVPIGTHARPPLSQHQSTSGDSDDANGEDSIMADDTGSGQSRRPIIGLQSRMDIDDDADRQTVIDSVTDSSHDLTVTDTTSDGQESETFNITHRSAVDGSIITNDNAQAVNNANSPPIVPSPYSLYFRDRTNIATQNFLNTMPREEDVLMSLQLLAYVSKYCNLRSYFQNSHFVPKLKIDRELRMLDEGASPVELIEEEDEYLLPDDVNIFPLVEKFTARHHSKDMSYWACVVMRNLCRKDESRGGIRQCANYKCGKWEEFTRQFAKCRRCRRTKYCSKDCQKAAWLYHRHWCATP</sequence>
<keyword id="KW-0963">Cytoplasm</keyword>
<keyword id="KW-0479">Metal-binding</keyword>
<keyword id="KW-1185">Reference proteome</keyword>
<keyword id="KW-0749">Sporulation</keyword>
<keyword id="KW-0862">Zinc</keyword>
<keyword id="KW-0863">Zinc-finger</keyword>
<accession>O42631</accession>
<accession>C8VR00</accession>
<accession>Q5BHA2</accession>
<comment type="function">
    <text evidence="4">Involved in determination of the onset of polarized growth and morphogenesis. Plays a role in the regulation of branching in hyphae and spore formation.</text>
</comment>
<comment type="subcellular location">
    <subcellularLocation>
        <location evidence="4">Cytoplasm</location>
    </subcellularLocation>
</comment>
<comment type="disruption phenotype">
    <text evidence="3">Produces partial defects in sexual reproduction and suppresses an apsA deletion mutation. Changes the colony morphology and inhibits sexual spore formation.</text>
</comment>
<comment type="similarity">
    <text evidence="5">Belongs to the MUB1/samB family.</text>
</comment>
<protein>
    <recommendedName>
        <fullName>MYND-type zinc finger protein samB</fullName>
    </recommendedName>
    <alternativeName>
        <fullName>Suppressor of anucleate metulae protein B</fullName>
    </alternativeName>
</protein>
<gene>
    <name type="primary">samB</name>
    <name type="ORF">AN0078</name>
</gene>
<dbReference type="EMBL" id="AJ000996">
    <property type="protein sequence ID" value="CAA04448.1"/>
    <property type="molecule type" value="Genomic_DNA"/>
</dbReference>
<dbReference type="EMBL" id="AACD01000003">
    <property type="protein sequence ID" value="EAA65256.1"/>
    <property type="molecule type" value="Genomic_DNA"/>
</dbReference>
<dbReference type="EMBL" id="BN001308">
    <property type="protein sequence ID" value="CBF90245.1"/>
    <property type="molecule type" value="Genomic_DNA"/>
</dbReference>
<dbReference type="RefSeq" id="XP_657682.1">
    <property type="nucleotide sequence ID" value="XM_652590.2"/>
</dbReference>
<dbReference type="SMR" id="O42631"/>
<dbReference type="FunCoup" id="O42631">
    <property type="interactions" value="72"/>
</dbReference>
<dbReference type="EnsemblFungi" id="CBF90245">
    <property type="protein sequence ID" value="CBF90245"/>
    <property type="gene ID" value="ANIA_00078"/>
</dbReference>
<dbReference type="GeneID" id="2875849"/>
<dbReference type="KEGG" id="ani:ANIA_00078"/>
<dbReference type="VEuPathDB" id="FungiDB:AN0078"/>
<dbReference type="eggNOG" id="ENOG502QTM3">
    <property type="taxonomic scope" value="Eukaryota"/>
</dbReference>
<dbReference type="HOGENOM" id="CLU_014851_0_0_1"/>
<dbReference type="InParanoid" id="O42631"/>
<dbReference type="OMA" id="QDMQYWA"/>
<dbReference type="OrthoDB" id="5594178at2759"/>
<dbReference type="Proteomes" id="UP000000560">
    <property type="component" value="Chromosome VIII"/>
</dbReference>
<dbReference type="GO" id="GO:0005737">
    <property type="term" value="C:cytoplasm"/>
    <property type="evidence" value="ECO:0007669"/>
    <property type="project" value="UniProtKB-SubCell"/>
</dbReference>
<dbReference type="GO" id="GO:1990304">
    <property type="term" value="C:MUB1-RAD6-UBR2 ubiquitin ligase complex"/>
    <property type="evidence" value="ECO:0000318"/>
    <property type="project" value="GO_Central"/>
</dbReference>
<dbReference type="GO" id="GO:0008270">
    <property type="term" value="F:zinc ion binding"/>
    <property type="evidence" value="ECO:0007669"/>
    <property type="project" value="UniProtKB-KW"/>
</dbReference>
<dbReference type="GO" id="GO:0007163">
    <property type="term" value="P:establishment or maintenance of cell polarity"/>
    <property type="evidence" value="ECO:0000315"/>
    <property type="project" value="AspGD"/>
</dbReference>
<dbReference type="GO" id="GO:1900735">
    <property type="term" value="P:positive regulation of flocculation"/>
    <property type="evidence" value="ECO:0007669"/>
    <property type="project" value="EnsemblFungi"/>
</dbReference>
<dbReference type="GO" id="GO:0043935">
    <property type="term" value="P:sexual sporulation resulting in formation of a cellular spore"/>
    <property type="evidence" value="ECO:0000315"/>
    <property type="project" value="AspGD"/>
</dbReference>
<dbReference type="GO" id="GO:0006511">
    <property type="term" value="P:ubiquitin-dependent protein catabolic process"/>
    <property type="evidence" value="ECO:0000318"/>
    <property type="project" value="GO_Central"/>
</dbReference>
<dbReference type="FunFam" id="6.10.140.2220:FF:000003">
    <property type="entry name" value="MYND-type zinc finger protein"/>
    <property type="match status" value="1"/>
</dbReference>
<dbReference type="Gene3D" id="6.10.140.2220">
    <property type="match status" value="1"/>
</dbReference>
<dbReference type="InterPro" id="IPR051664">
    <property type="entry name" value="MYND-type_zinc_finger"/>
</dbReference>
<dbReference type="InterPro" id="IPR002893">
    <property type="entry name" value="Znf_MYND"/>
</dbReference>
<dbReference type="PANTHER" id="PTHR47442">
    <property type="entry name" value="MYND-TYPE ZINC FINGER PROTEIN MUB1"/>
    <property type="match status" value="1"/>
</dbReference>
<dbReference type="PANTHER" id="PTHR47442:SF1">
    <property type="entry name" value="MYND-TYPE ZINC FINGER PROTEIN MUB1"/>
    <property type="match status" value="1"/>
</dbReference>
<dbReference type="Pfam" id="PF01753">
    <property type="entry name" value="zf-MYND"/>
    <property type="match status" value="1"/>
</dbReference>
<dbReference type="SUPFAM" id="SSF144232">
    <property type="entry name" value="HIT/MYND zinc finger-like"/>
    <property type="match status" value="1"/>
</dbReference>
<dbReference type="PROSITE" id="PS01360">
    <property type="entry name" value="ZF_MYND_1"/>
    <property type="match status" value="1"/>
</dbReference>
<dbReference type="PROSITE" id="PS50865">
    <property type="entry name" value="ZF_MYND_2"/>
    <property type="match status" value="1"/>
</dbReference>
<name>MUB1_EMENI</name>
<evidence type="ECO:0000255" key="1">
    <source>
        <dbReference type="PROSITE-ProRule" id="PRU00134"/>
    </source>
</evidence>
<evidence type="ECO:0000256" key="2">
    <source>
        <dbReference type="SAM" id="MobiDB-lite"/>
    </source>
</evidence>
<evidence type="ECO:0000269" key="3">
    <source>
    </source>
</evidence>
<evidence type="ECO:0000269" key="4">
    <source>
    </source>
</evidence>
<evidence type="ECO:0000305" key="5"/>